<name>RIMM_STRU0</name>
<sequence>MEFFNVGKIVNTQGLQGEMRVLSVSDFADERYRKGSQLALFDEKDHFYSEVEIASHRRQKNFDIIKFKGMNHINDIEKFKGFTLKVSQQHLSDLDEGEFYYHQIIGLEVYENDVYIGTIKEILQPGANDVWVVKRQGKKDLLLPFIPPVVLNVDVEANRVDVAIMEGLDDED</sequence>
<accession>B9DRW5</accession>
<organism>
    <name type="scientific">Streptococcus uberis (strain ATCC BAA-854 / 0140J)</name>
    <dbReference type="NCBI Taxonomy" id="218495"/>
    <lineage>
        <taxon>Bacteria</taxon>
        <taxon>Bacillati</taxon>
        <taxon>Bacillota</taxon>
        <taxon>Bacilli</taxon>
        <taxon>Lactobacillales</taxon>
        <taxon>Streptococcaceae</taxon>
        <taxon>Streptococcus</taxon>
    </lineage>
</organism>
<evidence type="ECO:0000255" key="1">
    <source>
        <dbReference type="HAMAP-Rule" id="MF_00014"/>
    </source>
</evidence>
<keyword id="KW-0143">Chaperone</keyword>
<keyword id="KW-0963">Cytoplasm</keyword>
<keyword id="KW-1185">Reference proteome</keyword>
<keyword id="KW-0690">Ribosome biogenesis</keyword>
<keyword id="KW-0698">rRNA processing</keyword>
<proteinExistence type="inferred from homology"/>
<protein>
    <recommendedName>
        <fullName evidence="1">Ribosome maturation factor RimM</fullName>
    </recommendedName>
</protein>
<reference key="1">
    <citation type="journal article" date="2009" name="BMC Genomics">
        <title>Evidence for niche adaptation in the genome of the bovine pathogen Streptococcus uberis.</title>
        <authorList>
            <person name="Ward P.N."/>
            <person name="Holden M.T.G."/>
            <person name="Leigh J.A."/>
            <person name="Lennard N."/>
            <person name="Bignell A."/>
            <person name="Barron A."/>
            <person name="Clark L."/>
            <person name="Quail M.A."/>
            <person name="Woodward J."/>
            <person name="Barrell B.G."/>
            <person name="Egan S.A."/>
            <person name="Field T.R."/>
            <person name="Maskell D."/>
            <person name="Kehoe M."/>
            <person name="Dowson C.G."/>
            <person name="Chanter N."/>
            <person name="Whatmore A.M."/>
            <person name="Bentley S.D."/>
            <person name="Parkhill J."/>
        </authorList>
    </citation>
    <scope>NUCLEOTIDE SEQUENCE [LARGE SCALE GENOMIC DNA]</scope>
    <source>
        <strain>ATCC BAA-854 / 0140J</strain>
    </source>
</reference>
<dbReference type="EMBL" id="AM946015">
    <property type="protein sequence ID" value="CAR41678.1"/>
    <property type="molecule type" value="Genomic_DNA"/>
</dbReference>
<dbReference type="RefSeq" id="WP_012658260.1">
    <property type="nucleotide sequence ID" value="NC_012004.1"/>
</dbReference>
<dbReference type="SMR" id="B9DRW5"/>
<dbReference type="STRING" id="218495.SUB0743"/>
<dbReference type="KEGG" id="sub:SUB0743"/>
<dbReference type="eggNOG" id="COG0806">
    <property type="taxonomic scope" value="Bacteria"/>
</dbReference>
<dbReference type="HOGENOM" id="CLU_077636_3_1_9"/>
<dbReference type="OrthoDB" id="9810331at2"/>
<dbReference type="Proteomes" id="UP000000449">
    <property type="component" value="Chromosome"/>
</dbReference>
<dbReference type="GO" id="GO:0005737">
    <property type="term" value="C:cytoplasm"/>
    <property type="evidence" value="ECO:0007669"/>
    <property type="project" value="UniProtKB-SubCell"/>
</dbReference>
<dbReference type="GO" id="GO:0005840">
    <property type="term" value="C:ribosome"/>
    <property type="evidence" value="ECO:0007669"/>
    <property type="project" value="InterPro"/>
</dbReference>
<dbReference type="GO" id="GO:0043022">
    <property type="term" value="F:ribosome binding"/>
    <property type="evidence" value="ECO:0007669"/>
    <property type="project" value="InterPro"/>
</dbReference>
<dbReference type="GO" id="GO:0042274">
    <property type="term" value="P:ribosomal small subunit biogenesis"/>
    <property type="evidence" value="ECO:0007669"/>
    <property type="project" value="UniProtKB-UniRule"/>
</dbReference>
<dbReference type="GO" id="GO:0006364">
    <property type="term" value="P:rRNA processing"/>
    <property type="evidence" value="ECO:0007669"/>
    <property type="project" value="UniProtKB-UniRule"/>
</dbReference>
<dbReference type="Gene3D" id="2.30.30.240">
    <property type="entry name" value="PRC-barrel domain"/>
    <property type="match status" value="1"/>
</dbReference>
<dbReference type="Gene3D" id="2.40.30.60">
    <property type="entry name" value="RimM"/>
    <property type="match status" value="1"/>
</dbReference>
<dbReference type="HAMAP" id="MF_00014">
    <property type="entry name" value="Ribosome_mat_RimM"/>
    <property type="match status" value="1"/>
</dbReference>
<dbReference type="InterPro" id="IPR027275">
    <property type="entry name" value="PRC-brl_dom"/>
</dbReference>
<dbReference type="InterPro" id="IPR011033">
    <property type="entry name" value="PRC_barrel-like_sf"/>
</dbReference>
<dbReference type="InterPro" id="IPR011961">
    <property type="entry name" value="RimM"/>
</dbReference>
<dbReference type="InterPro" id="IPR002676">
    <property type="entry name" value="RimM_N"/>
</dbReference>
<dbReference type="InterPro" id="IPR036976">
    <property type="entry name" value="RimM_N_sf"/>
</dbReference>
<dbReference type="InterPro" id="IPR009000">
    <property type="entry name" value="Transl_B-barrel_sf"/>
</dbReference>
<dbReference type="NCBIfam" id="TIGR02273">
    <property type="entry name" value="16S_RimM"/>
    <property type="match status" value="1"/>
</dbReference>
<dbReference type="PANTHER" id="PTHR33692">
    <property type="entry name" value="RIBOSOME MATURATION FACTOR RIMM"/>
    <property type="match status" value="1"/>
</dbReference>
<dbReference type="PANTHER" id="PTHR33692:SF1">
    <property type="entry name" value="RIBOSOME MATURATION FACTOR RIMM"/>
    <property type="match status" value="1"/>
</dbReference>
<dbReference type="Pfam" id="PF05239">
    <property type="entry name" value="PRC"/>
    <property type="match status" value="1"/>
</dbReference>
<dbReference type="Pfam" id="PF01782">
    <property type="entry name" value="RimM"/>
    <property type="match status" value="1"/>
</dbReference>
<dbReference type="SUPFAM" id="SSF50346">
    <property type="entry name" value="PRC-barrel domain"/>
    <property type="match status" value="1"/>
</dbReference>
<dbReference type="SUPFAM" id="SSF50447">
    <property type="entry name" value="Translation proteins"/>
    <property type="match status" value="1"/>
</dbReference>
<gene>
    <name evidence="1" type="primary">rimM</name>
    <name type="ordered locus">SUB0743</name>
</gene>
<feature type="chain" id="PRO_1000196575" description="Ribosome maturation factor RimM">
    <location>
        <begin position="1"/>
        <end position="172"/>
    </location>
</feature>
<feature type="domain" description="PRC barrel" evidence="1">
    <location>
        <begin position="95"/>
        <end position="168"/>
    </location>
</feature>
<comment type="function">
    <text evidence="1">An accessory protein needed during the final step in the assembly of 30S ribosomal subunit, possibly for assembly of the head region. Essential for efficient processing of 16S rRNA. May be needed both before and after RbfA during the maturation of 16S rRNA. It has affinity for free ribosomal 30S subunits but not for 70S ribosomes.</text>
</comment>
<comment type="subunit">
    <text evidence="1">Binds ribosomal protein uS19.</text>
</comment>
<comment type="subcellular location">
    <subcellularLocation>
        <location evidence="1">Cytoplasm</location>
    </subcellularLocation>
</comment>
<comment type="domain">
    <text evidence="1">The PRC barrel domain binds ribosomal protein uS19.</text>
</comment>
<comment type="similarity">
    <text evidence="1">Belongs to the RimM family.</text>
</comment>